<name>IF3_STRPG</name>
<accession>A2RF84</accession>
<feature type="chain" id="PRO_1000004576" description="Translation initiation factor IF-3">
    <location>
        <begin position="1"/>
        <end position="176"/>
    </location>
</feature>
<protein>
    <recommendedName>
        <fullName evidence="1">Translation initiation factor IF-3</fullName>
    </recommendedName>
</protein>
<comment type="function">
    <text evidence="1">IF-3 binds to the 30S ribosomal subunit and shifts the equilibrium between 70S ribosomes and their 50S and 30S subunits in favor of the free subunits, thus enhancing the availability of 30S subunits on which protein synthesis initiation begins.</text>
</comment>
<comment type="subunit">
    <text evidence="1">Monomer.</text>
</comment>
<comment type="subcellular location">
    <subcellularLocation>
        <location evidence="1">Cytoplasm</location>
    </subcellularLocation>
</comment>
<comment type="similarity">
    <text evidence="1">Belongs to the IF-3 family.</text>
</comment>
<dbReference type="EMBL" id="AM295007">
    <property type="protein sequence ID" value="CAM30513.1"/>
    <property type="molecule type" value="Genomic_DNA"/>
</dbReference>
<dbReference type="RefSeq" id="WP_002985152.1">
    <property type="nucleotide sequence ID" value="NC_009332.1"/>
</dbReference>
<dbReference type="SMR" id="A2RF84"/>
<dbReference type="GeneID" id="69901077"/>
<dbReference type="KEGG" id="spf:SpyM51188"/>
<dbReference type="HOGENOM" id="CLU_054919_3_2_9"/>
<dbReference type="GO" id="GO:0005829">
    <property type="term" value="C:cytosol"/>
    <property type="evidence" value="ECO:0007669"/>
    <property type="project" value="TreeGrafter"/>
</dbReference>
<dbReference type="GO" id="GO:0016020">
    <property type="term" value="C:membrane"/>
    <property type="evidence" value="ECO:0007669"/>
    <property type="project" value="TreeGrafter"/>
</dbReference>
<dbReference type="GO" id="GO:0043022">
    <property type="term" value="F:ribosome binding"/>
    <property type="evidence" value="ECO:0007669"/>
    <property type="project" value="TreeGrafter"/>
</dbReference>
<dbReference type="GO" id="GO:0003743">
    <property type="term" value="F:translation initiation factor activity"/>
    <property type="evidence" value="ECO:0007669"/>
    <property type="project" value="UniProtKB-UniRule"/>
</dbReference>
<dbReference type="GO" id="GO:0032790">
    <property type="term" value="P:ribosome disassembly"/>
    <property type="evidence" value="ECO:0007669"/>
    <property type="project" value="TreeGrafter"/>
</dbReference>
<dbReference type="FunFam" id="3.10.20.80:FF:000001">
    <property type="entry name" value="Translation initiation factor IF-3"/>
    <property type="match status" value="1"/>
</dbReference>
<dbReference type="FunFam" id="3.30.110.10:FF:000001">
    <property type="entry name" value="Translation initiation factor IF-3"/>
    <property type="match status" value="1"/>
</dbReference>
<dbReference type="Gene3D" id="3.30.110.10">
    <property type="entry name" value="Translation initiation factor 3 (IF-3), C-terminal domain"/>
    <property type="match status" value="1"/>
</dbReference>
<dbReference type="Gene3D" id="3.10.20.80">
    <property type="entry name" value="Translation initiation factor 3 (IF-3), N-terminal domain"/>
    <property type="match status" value="1"/>
</dbReference>
<dbReference type="HAMAP" id="MF_00080">
    <property type="entry name" value="IF_3"/>
    <property type="match status" value="1"/>
</dbReference>
<dbReference type="InterPro" id="IPR036788">
    <property type="entry name" value="T_IF-3_C_sf"/>
</dbReference>
<dbReference type="InterPro" id="IPR036787">
    <property type="entry name" value="T_IF-3_N_sf"/>
</dbReference>
<dbReference type="InterPro" id="IPR019813">
    <property type="entry name" value="Translation_initiation_fac3_CS"/>
</dbReference>
<dbReference type="InterPro" id="IPR001288">
    <property type="entry name" value="Translation_initiation_fac_3"/>
</dbReference>
<dbReference type="InterPro" id="IPR019815">
    <property type="entry name" value="Translation_initiation_fac_3_C"/>
</dbReference>
<dbReference type="InterPro" id="IPR019814">
    <property type="entry name" value="Translation_initiation_fac_3_N"/>
</dbReference>
<dbReference type="NCBIfam" id="TIGR00168">
    <property type="entry name" value="infC"/>
    <property type="match status" value="1"/>
</dbReference>
<dbReference type="PANTHER" id="PTHR10938">
    <property type="entry name" value="TRANSLATION INITIATION FACTOR IF-3"/>
    <property type="match status" value="1"/>
</dbReference>
<dbReference type="PANTHER" id="PTHR10938:SF0">
    <property type="entry name" value="TRANSLATION INITIATION FACTOR IF-3, MITOCHONDRIAL"/>
    <property type="match status" value="1"/>
</dbReference>
<dbReference type="Pfam" id="PF00707">
    <property type="entry name" value="IF3_C"/>
    <property type="match status" value="1"/>
</dbReference>
<dbReference type="Pfam" id="PF05198">
    <property type="entry name" value="IF3_N"/>
    <property type="match status" value="1"/>
</dbReference>
<dbReference type="SUPFAM" id="SSF55200">
    <property type="entry name" value="Translation initiation factor IF3, C-terminal domain"/>
    <property type="match status" value="1"/>
</dbReference>
<dbReference type="SUPFAM" id="SSF54364">
    <property type="entry name" value="Translation initiation factor IF3, N-terminal domain"/>
    <property type="match status" value="1"/>
</dbReference>
<dbReference type="PROSITE" id="PS00938">
    <property type="entry name" value="IF3"/>
    <property type="match status" value="1"/>
</dbReference>
<keyword id="KW-0963">Cytoplasm</keyword>
<keyword id="KW-0396">Initiation factor</keyword>
<keyword id="KW-0648">Protein biosynthesis</keyword>
<proteinExistence type="inferred from homology"/>
<reference key="1">
    <citation type="journal article" date="2007" name="J. Bacteriol.">
        <title>Complete genome of acute rheumatic fever-associated serotype M5 Streptococcus pyogenes strain Manfredo.</title>
        <authorList>
            <person name="Holden M.T.G."/>
            <person name="Scott A."/>
            <person name="Cherevach I."/>
            <person name="Chillingworth T."/>
            <person name="Churcher C."/>
            <person name="Cronin A."/>
            <person name="Dowd L."/>
            <person name="Feltwell T."/>
            <person name="Hamlin N."/>
            <person name="Holroyd S."/>
            <person name="Jagels K."/>
            <person name="Moule S."/>
            <person name="Mungall K."/>
            <person name="Quail M.A."/>
            <person name="Price C."/>
            <person name="Rabbinowitsch E."/>
            <person name="Sharp S."/>
            <person name="Skelton J."/>
            <person name="Whitehead S."/>
            <person name="Barrell B.G."/>
            <person name="Kehoe M."/>
            <person name="Parkhill J."/>
        </authorList>
    </citation>
    <scope>NUCLEOTIDE SEQUENCE [LARGE SCALE GENOMIC DNA]</scope>
    <source>
        <strain>Manfredo</strain>
    </source>
</reference>
<sequence length="176" mass="20054">MKIIAKKDLFINDEIRVREVRLVGLEGEQLGIKPLSEAQSLADASNVDLVLIQPQAVPPVAKLMDYGKFKFEYQKKQKEQRKKQSVVTVKEVRLSPVIDKGDFETKLRNGRKFLEKGNKVKVSIRFKGRMITHKEIGAKVLADFAEATQDIAIIEQRAKMDGRQMFMQLAPISDKK</sequence>
<evidence type="ECO:0000255" key="1">
    <source>
        <dbReference type="HAMAP-Rule" id="MF_00080"/>
    </source>
</evidence>
<gene>
    <name evidence="1" type="primary">infC</name>
    <name type="ordered locus">SpyM51188</name>
</gene>
<organism>
    <name type="scientific">Streptococcus pyogenes serotype M5 (strain Manfredo)</name>
    <dbReference type="NCBI Taxonomy" id="160491"/>
    <lineage>
        <taxon>Bacteria</taxon>
        <taxon>Bacillati</taxon>
        <taxon>Bacillota</taxon>
        <taxon>Bacilli</taxon>
        <taxon>Lactobacillales</taxon>
        <taxon>Streptococcaceae</taxon>
        <taxon>Streptococcus</taxon>
    </lineage>
</organism>